<reference key="1">
    <citation type="journal article" date="2003" name="Proc. Natl. Acad. Sci. U.S.A.">
        <title>The complete genome sequence of the carcinogenic bacterium Helicobacter hepaticus.</title>
        <authorList>
            <person name="Suerbaum S."/>
            <person name="Josenhans C."/>
            <person name="Sterzenbach T."/>
            <person name="Drescher B."/>
            <person name="Brandt P."/>
            <person name="Bell M."/>
            <person name="Droege M."/>
            <person name="Fartmann B."/>
            <person name="Fischer H.-P."/>
            <person name="Ge Z."/>
            <person name="Hoerster A."/>
            <person name="Holland R."/>
            <person name="Klein K."/>
            <person name="Koenig J."/>
            <person name="Macko L."/>
            <person name="Mendz G.L."/>
            <person name="Nyakatura G."/>
            <person name="Schauer D.B."/>
            <person name="Shen Z."/>
            <person name="Weber J."/>
            <person name="Frosch M."/>
            <person name="Fox J.G."/>
        </authorList>
    </citation>
    <scope>NUCLEOTIDE SEQUENCE [LARGE SCALE GENOMIC DNA]</scope>
    <source>
        <strain>ATCC 51449 / 3B1</strain>
    </source>
</reference>
<dbReference type="EC" id="2.9.1.1" evidence="1"/>
<dbReference type="EMBL" id="AE017125">
    <property type="protein sequence ID" value="AAP77337.1"/>
    <property type="molecule type" value="Genomic_DNA"/>
</dbReference>
<dbReference type="RefSeq" id="WP_011115582.1">
    <property type="nucleotide sequence ID" value="NC_004917.1"/>
</dbReference>
<dbReference type="SMR" id="Q7VI68"/>
<dbReference type="STRING" id="235279.HH_0740"/>
<dbReference type="KEGG" id="hhe:HH_0740"/>
<dbReference type="eggNOG" id="COG1921">
    <property type="taxonomic scope" value="Bacteria"/>
</dbReference>
<dbReference type="HOGENOM" id="CLU_038142_1_0_7"/>
<dbReference type="OrthoDB" id="9787096at2"/>
<dbReference type="UniPathway" id="UPA00906">
    <property type="reaction ID" value="UER00896"/>
</dbReference>
<dbReference type="Proteomes" id="UP000002495">
    <property type="component" value="Chromosome"/>
</dbReference>
<dbReference type="GO" id="GO:0005737">
    <property type="term" value="C:cytoplasm"/>
    <property type="evidence" value="ECO:0007669"/>
    <property type="project" value="UniProtKB-SubCell"/>
</dbReference>
<dbReference type="GO" id="GO:0004125">
    <property type="term" value="F:L-seryl-tRNA(Sec) selenium transferase activity"/>
    <property type="evidence" value="ECO:0007669"/>
    <property type="project" value="UniProtKB-UniRule"/>
</dbReference>
<dbReference type="GO" id="GO:0001717">
    <property type="term" value="P:conversion of seryl-tRNAsec to selenocys-tRNAsec"/>
    <property type="evidence" value="ECO:0007669"/>
    <property type="project" value="UniProtKB-UniRule"/>
</dbReference>
<dbReference type="GO" id="GO:0001514">
    <property type="term" value="P:selenocysteine incorporation"/>
    <property type="evidence" value="ECO:0007669"/>
    <property type="project" value="UniProtKB-UniRule"/>
</dbReference>
<dbReference type="Gene3D" id="3.90.1150.180">
    <property type="match status" value="1"/>
</dbReference>
<dbReference type="Gene3D" id="3.40.640.10">
    <property type="entry name" value="Type I PLP-dependent aspartate aminotransferase-like (Major domain)"/>
    <property type="match status" value="1"/>
</dbReference>
<dbReference type="HAMAP" id="MF_00423">
    <property type="entry name" value="SelA"/>
    <property type="match status" value="1"/>
</dbReference>
<dbReference type="InterPro" id="IPR015424">
    <property type="entry name" value="PyrdxlP-dep_Trfase"/>
</dbReference>
<dbReference type="InterPro" id="IPR015421">
    <property type="entry name" value="PyrdxlP-dep_Trfase_major"/>
</dbReference>
<dbReference type="InterPro" id="IPR018319">
    <property type="entry name" value="SelA-like"/>
</dbReference>
<dbReference type="InterPro" id="IPR004534">
    <property type="entry name" value="SelA_trans"/>
</dbReference>
<dbReference type="NCBIfam" id="TIGR00474">
    <property type="entry name" value="selA"/>
    <property type="match status" value="1"/>
</dbReference>
<dbReference type="PANTHER" id="PTHR32328">
    <property type="entry name" value="L-SERYL-TRNA(SEC) SELENIUM TRANSFERASE"/>
    <property type="match status" value="1"/>
</dbReference>
<dbReference type="PANTHER" id="PTHR32328:SF0">
    <property type="entry name" value="L-SERYL-TRNA(SEC) SELENIUM TRANSFERASE"/>
    <property type="match status" value="1"/>
</dbReference>
<dbReference type="Pfam" id="PF03841">
    <property type="entry name" value="SelA"/>
    <property type="match status" value="1"/>
</dbReference>
<dbReference type="SUPFAM" id="SSF53383">
    <property type="entry name" value="PLP-dependent transferases"/>
    <property type="match status" value="1"/>
</dbReference>
<name>SELA_HELHP</name>
<accession>Q7VI68</accession>
<keyword id="KW-0963">Cytoplasm</keyword>
<keyword id="KW-0648">Protein biosynthesis</keyword>
<keyword id="KW-0663">Pyridoxal phosphate</keyword>
<keyword id="KW-1185">Reference proteome</keyword>
<keyword id="KW-0711">Selenium</keyword>
<keyword id="KW-0808">Transferase</keyword>
<gene>
    <name evidence="1" type="primary">selA</name>
    <name type="ordered locus">HH_0740</name>
</gene>
<organism>
    <name type="scientific">Helicobacter hepaticus (strain ATCC 51449 / 3B1)</name>
    <dbReference type="NCBI Taxonomy" id="235279"/>
    <lineage>
        <taxon>Bacteria</taxon>
        <taxon>Pseudomonadati</taxon>
        <taxon>Campylobacterota</taxon>
        <taxon>Epsilonproteobacteria</taxon>
        <taxon>Campylobacterales</taxon>
        <taxon>Helicobacteraceae</taxon>
        <taxon>Helicobacter</taxon>
    </lineage>
</organism>
<sequence>MQHLLKSLPKVDTLLAHNELKMFQKSTLLPLIQSHLSLLRENICSNTLSPKELESALNEIIPVIKKKAIEATKPTLTRVINATGVVIHTNLGRSVLSPQILDEITPFLRSYHTLEYDLAKGKRSERYTHTKQILCEMFGCEDALLVNNNAAAVLLILNTFAAHKEVIISRGELVEIGGSFRIPEVMKSASSILCEVGATNKTHLKDYENAINEQSAMIMKVHQSNFKQIGFVKQCHIKEIIHLAQKHHLIDYFDLGSGHIGALPLADEPSVREICKYKPSLLSFSGDKLLGGPQVGIIIGKSQLIAQLKHNQLLRALRVDKFSILALQATLKAYQNKEYHKIPTLAMLAFTPKELESKAKNLKKRILASSIASELEVEVIPLHSLAGGGSVPHLSFDSFGISLQAKHLQVQDFEFALRALGLISCIQGEKILLDVRTLLEGDEERIMEILGEVLSS</sequence>
<evidence type="ECO:0000255" key="1">
    <source>
        <dbReference type="HAMAP-Rule" id="MF_00423"/>
    </source>
</evidence>
<protein>
    <recommendedName>
        <fullName evidence="1">L-seryl-tRNA(Sec) selenium transferase</fullName>
        <ecNumber evidence="1">2.9.1.1</ecNumber>
    </recommendedName>
    <alternativeName>
        <fullName evidence="1">Selenocysteine synthase</fullName>
        <shortName evidence="1">Sec synthase</shortName>
    </alternativeName>
    <alternativeName>
        <fullName evidence="1">Selenocysteinyl-tRNA(Sec) synthase</fullName>
    </alternativeName>
</protein>
<proteinExistence type="inferred from homology"/>
<feature type="chain" id="PRO_0000189606" description="L-seryl-tRNA(Sec) selenium transferase">
    <location>
        <begin position="1"/>
        <end position="456"/>
    </location>
</feature>
<feature type="modified residue" description="N6-(pyridoxal phosphate)lysine" evidence="1">
    <location>
        <position position="288"/>
    </location>
</feature>
<comment type="function">
    <text evidence="1">Converts seryl-tRNA(Sec) to selenocysteinyl-tRNA(Sec) required for selenoprotein biosynthesis.</text>
</comment>
<comment type="catalytic activity">
    <reaction evidence="1">
        <text>L-seryl-tRNA(Sec) + selenophosphate + H(+) = L-selenocysteinyl-tRNA(Sec) + phosphate</text>
        <dbReference type="Rhea" id="RHEA:22728"/>
        <dbReference type="Rhea" id="RHEA-COMP:9742"/>
        <dbReference type="Rhea" id="RHEA-COMP:9743"/>
        <dbReference type="ChEBI" id="CHEBI:15378"/>
        <dbReference type="ChEBI" id="CHEBI:16144"/>
        <dbReference type="ChEBI" id="CHEBI:43474"/>
        <dbReference type="ChEBI" id="CHEBI:78533"/>
        <dbReference type="ChEBI" id="CHEBI:78573"/>
        <dbReference type="EC" id="2.9.1.1"/>
    </reaction>
</comment>
<comment type="cofactor">
    <cofactor evidence="1">
        <name>pyridoxal 5'-phosphate</name>
        <dbReference type="ChEBI" id="CHEBI:597326"/>
    </cofactor>
</comment>
<comment type="pathway">
    <text evidence="1">Aminoacyl-tRNA biosynthesis; selenocysteinyl-tRNA(Sec) biosynthesis; selenocysteinyl-tRNA(Sec) from L-seryl-tRNA(Sec) (bacterial route): step 1/1.</text>
</comment>
<comment type="subcellular location">
    <subcellularLocation>
        <location evidence="1">Cytoplasm</location>
    </subcellularLocation>
</comment>
<comment type="similarity">
    <text evidence="1">Belongs to the SelA family.</text>
</comment>